<organism>
    <name type="scientific">Cochliobolus heterostrophus</name>
    <name type="common">Southern corn leaf blight fungus</name>
    <name type="synonym">Bipolaris maydis</name>
    <dbReference type="NCBI Taxonomy" id="5016"/>
    <lineage>
        <taxon>Eukaryota</taxon>
        <taxon>Fungi</taxon>
        <taxon>Dikarya</taxon>
        <taxon>Ascomycota</taxon>
        <taxon>Pezizomycotina</taxon>
        <taxon>Dothideomycetes</taxon>
        <taxon>Pleosporomycetidae</taxon>
        <taxon>Pleosporales</taxon>
        <taxon>Pleosporineae</taxon>
        <taxon>Pleosporaceae</taxon>
        <taxon>Bipolaris</taxon>
    </lineage>
</organism>
<keyword id="KW-0238">DNA-binding</keyword>
<keyword id="KW-0278">Fertilization</keyword>
<keyword id="KW-0539">Nucleus</keyword>
<keyword id="KW-0804">Transcription</keyword>
<keyword id="KW-0805">Transcription regulation</keyword>
<feature type="chain" id="PRO_0000048591" description="Mating-type protein MAT-2">
    <location>
        <begin position="1"/>
        <end position="343"/>
    </location>
</feature>
<feature type="DNA-binding region" description="HMG box" evidence="1">
    <location>
        <begin position="131"/>
        <end position="199"/>
    </location>
</feature>
<feature type="region of interest" description="Disordered" evidence="2">
    <location>
        <begin position="98"/>
        <end position="117"/>
    </location>
</feature>
<feature type="region of interest" description="Disordered" evidence="2">
    <location>
        <begin position="177"/>
        <end position="223"/>
    </location>
</feature>
<feature type="compositionally biased region" description="Low complexity" evidence="2">
    <location>
        <begin position="99"/>
        <end position="117"/>
    </location>
</feature>
<feature type="compositionally biased region" description="Basic residues" evidence="2">
    <location>
        <begin position="206"/>
        <end position="218"/>
    </location>
</feature>
<name>MAT2_COCHE</name>
<reference key="1">
    <citation type="journal article" date="1993" name="Mol. Gen. Genet.">
        <title>Cloning and analysis of the mating type genes from Cochliobolus heterostrophus.</title>
        <authorList>
            <person name="Turgeon B.G."/>
            <person name="Bohlmann H."/>
            <person name="Ciuffetti L.M."/>
            <person name="Christiansen S.K."/>
            <person name="Yang G."/>
            <person name="Schaefer W."/>
            <person name="Yoder O.C."/>
        </authorList>
    </citation>
    <scope>NUCLEOTIDE SEQUENCE [GENOMIC DNA]</scope>
    <source>
        <strain>ATCC 48330 / C3</strain>
    </source>
</reference>
<reference key="2">
    <citation type="journal article" date="1998" name="Mol. Gen. Genet.">
        <title>Single mating type-specific genes and their 3' UTRs control mating and fertility in Cochliobolus heterostrophus.</title>
        <authorList>
            <person name="Wirsel S."/>
            <person name="Horwitz B."/>
            <person name="Yamaguchi K."/>
            <person name="Yoder O.C."/>
            <person name="Turgeon B.G."/>
        </authorList>
    </citation>
    <scope>NUCLEOTIDE SEQUENCE [GENOMIC DNA]</scope>
    <source>
        <strain>ATCC 48331 / C4</strain>
    </source>
</reference>
<comment type="subcellular location">
    <subcellularLocation>
        <location evidence="1">Nucleus</location>
    </subcellularLocation>
</comment>
<protein>
    <recommendedName>
        <fullName>Mating-type protein MAT-2</fullName>
    </recommendedName>
</protein>
<evidence type="ECO:0000255" key="1">
    <source>
        <dbReference type="PROSITE-ProRule" id="PRU00267"/>
    </source>
</evidence>
<evidence type="ECO:0000256" key="2">
    <source>
        <dbReference type="SAM" id="MobiDB-lite"/>
    </source>
</evidence>
<gene>
    <name type="primary">MAT2</name>
</gene>
<sequence length="343" mass="38319">MDSTVYSTPPTNSISLAEAIKIAEARFEAAVQGCKDDWHNGNDLVILQDNIPQLFGGILVEHFKRCVGEVCGFPVELTVMDGGDNYHTLVQMPKNNMRSPQVVSSPQSAQTSPSEQTSINLKAVAAGLKKAPRPMNCWIIFRDAMHKHLKAEFPHLTIQEISTRCSHIWHNLSPEAKKPWQDAAQSAKEEHLRQHPNYKYTPRKPGEKKKRQSRKSKRAAAMTTAPEVLQFQLSPKLIPTVPEVTDEPPLAANPVTANGNNACPEDVSNCFDPNVFPEIYPEAPMAADFFYNTESIRHSLLDTEFDIDFNMDTTFALFDDEMLAFRDGADGDATLPSLFEDTY</sequence>
<dbReference type="EMBL" id="X68398">
    <property type="protein sequence ID" value="CAA48464.1"/>
    <property type="molecule type" value="Genomic_DNA"/>
</dbReference>
<dbReference type="EMBL" id="AF027687">
    <property type="protein sequence ID" value="AAB84004.1"/>
    <property type="molecule type" value="Genomic_DNA"/>
</dbReference>
<dbReference type="PIR" id="S34811">
    <property type="entry name" value="S34811"/>
</dbReference>
<dbReference type="SMR" id="Q02991"/>
<dbReference type="GO" id="GO:0005634">
    <property type="term" value="C:nucleus"/>
    <property type="evidence" value="ECO:0007669"/>
    <property type="project" value="UniProtKB-SubCell"/>
</dbReference>
<dbReference type="GO" id="GO:0001228">
    <property type="term" value="F:DNA-binding transcription activator activity, RNA polymerase II-specific"/>
    <property type="evidence" value="ECO:0007669"/>
    <property type="project" value="TreeGrafter"/>
</dbReference>
<dbReference type="GO" id="GO:0000978">
    <property type="term" value="F:RNA polymerase II cis-regulatory region sequence-specific DNA binding"/>
    <property type="evidence" value="ECO:0007669"/>
    <property type="project" value="TreeGrafter"/>
</dbReference>
<dbReference type="GO" id="GO:0030154">
    <property type="term" value="P:cell differentiation"/>
    <property type="evidence" value="ECO:0007669"/>
    <property type="project" value="TreeGrafter"/>
</dbReference>
<dbReference type="GO" id="GO:0007338">
    <property type="term" value="P:single fertilization"/>
    <property type="evidence" value="ECO:0007669"/>
    <property type="project" value="UniProtKB-KW"/>
</dbReference>
<dbReference type="CDD" id="cd01389">
    <property type="entry name" value="HMG-box_ROX1-like"/>
    <property type="match status" value="1"/>
</dbReference>
<dbReference type="Gene3D" id="1.10.30.10">
    <property type="entry name" value="High mobility group box domain"/>
    <property type="match status" value="1"/>
</dbReference>
<dbReference type="InterPro" id="IPR009071">
    <property type="entry name" value="HMG_box_dom"/>
</dbReference>
<dbReference type="InterPro" id="IPR036910">
    <property type="entry name" value="HMG_box_dom_sf"/>
</dbReference>
<dbReference type="InterPro" id="IPR050140">
    <property type="entry name" value="SRY-related_HMG-box_TF-like"/>
</dbReference>
<dbReference type="PANTHER" id="PTHR10270:SF161">
    <property type="entry name" value="SEX-DETERMINING REGION Y PROTEIN"/>
    <property type="match status" value="1"/>
</dbReference>
<dbReference type="PANTHER" id="PTHR10270">
    <property type="entry name" value="SOX TRANSCRIPTION FACTOR"/>
    <property type="match status" value="1"/>
</dbReference>
<dbReference type="Pfam" id="PF00505">
    <property type="entry name" value="HMG_box"/>
    <property type="match status" value="1"/>
</dbReference>
<dbReference type="SMART" id="SM00398">
    <property type="entry name" value="HMG"/>
    <property type="match status" value="1"/>
</dbReference>
<dbReference type="SUPFAM" id="SSF47095">
    <property type="entry name" value="HMG-box"/>
    <property type="match status" value="1"/>
</dbReference>
<dbReference type="PROSITE" id="PS50118">
    <property type="entry name" value="HMG_BOX_2"/>
    <property type="match status" value="1"/>
</dbReference>
<proteinExistence type="inferred from homology"/>
<accession>Q02991</accession>